<name>ISPF_PSEA8</name>
<comment type="function">
    <text evidence="1">Involved in the biosynthesis of isopentenyl diphosphate (IPP) and dimethylallyl diphosphate (DMAPP), two major building blocks of isoprenoid compounds. Catalyzes the conversion of 4-diphosphocytidyl-2-C-methyl-D-erythritol 2-phosphate (CDP-ME2P) to 2-C-methyl-D-erythritol 2,4-cyclodiphosphate (ME-CPP) with a corresponding release of cytidine 5-monophosphate (CMP).</text>
</comment>
<comment type="catalytic activity">
    <reaction evidence="1">
        <text>4-CDP-2-C-methyl-D-erythritol 2-phosphate = 2-C-methyl-D-erythritol 2,4-cyclic diphosphate + CMP</text>
        <dbReference type="Rhea" id="RHEA:23864"/>
        <dbReference type="ChEBI" id="CHEBI:57919"/>
        <dbReference type="ChEBI" id="CHEBI:58483"/>
        <dbReference type="ChEBI" id="CHEBI:60377"/>
        <dbReference type="EC" id="4.6.1.12"/>
    </reaction>
</comment>
<comment type="cofactor">
    <cofactor evidence="1">
        <name>a divalent metal cation</name>
        <dbReference type="ChEBI" id="CHEBI:60240"/>
    </cofactor>
    <text evidence="1">Binds 1 divalent metal cation per subunit.</text>
</comment>
<comment type="pathway">
    <text evidence="1">Isoprenoid biosynthesis; isopentenyl diphosphate biosynthesis via DXP pathway; isopentenyl diphosphate from 1-deoxy-D-xylulose 5-phosphate: step 4/6.</text>
</comment>
<comment type="subunit">
    <text evidence="1">Homotrimer.</text>
</comment>
<comment type="similarity">
    <text evidence="1">Belongs to the IspF family.</text>
</comment>
<dbReference type="EC" id="4.6.1.12" evidence="1"/>
<dbReference type="EMBL" id="FM209186">
    <property type="protein sequence ID" value="CAW26136.1"/>
    <property type="molecule type" value="Genomic_DNA"/>
</dbReference>
<dbReference type="RefSeq" id="WP_003098560.1">
    <property type="nucleotide sequence ID" value="NC_011770.1"/>
</dbReference>
<dbReference type="SMR" id="B7V8C1"/>
<dbReference type="KEGG" id="pag:PLES_14081"/>
<dbReference type="HOGENOM" id="CLU_084630_2_0_6"/>
<dbReference type="UniPathway" id="UPA00056">
    <property type="reaction ID" value="UER00095"/>
</dbReference>
<dbReference type="GO" id="GO:0008685">
    <property type="term" value="F:2-C-methyl-D-erythritol 2,4-cyclodiphosphate synthase activity"/>
    <property type="evidence" value="ECO:0007669"/>
    <property type="project" value="UniProtKB-UniRule"/>
</dbReference>
<dbReference type="GO" id="GO:0046872">
    <property type="term" value="F:metal ion binding"/>
    <property type="evidence" value="ECO:0007669"/>
    <property type="project" value="UniProtKB-KW"/>
</dbReference>
<dbReference type="GO" id="GO:0019288">
    <property type="term" value="P:isopentenyl diphosphate biosynthetic process, methylerythritol 4-phosphate pathway"/>
    <property type="evidence" value="ECO:0007669"/>
    <property type="project" value="UniProtKB-UniRule"/>
</dbReference>
<dbReference type="GO" id="GO:0016114">
    <property type="term" value="P:terpenoid biosynthetic process"/>
    <property type="evidence" value="ECO:0007669"/>
    <property type="project" value="InterPro"/>
</dbReference>
<dbReference type="CDD" id="cd00554">
    <property type="entry name" value="MECDP_synthase"/>
    <property type="match status" value="1"/>
</dbReference>
<dbReference type="FunFam" id="3.30.1330.50:FF:000001">
    <property type="entry name" value="2-C-methyl-D-erythritol 2,4-cyclodiphosphate synthase"/>
    <property type="match status" value="1"/>
</dbReference>
<dbReference type="Gene3D" id="3.30.1330.50">
    <property type="entry name" value="2-C-methyl-D-erythritol 2,4-cyclodiphosphate synthase"/>
    <property type="match status" value="1"/>
</dbReference>
<dbReference type="HAMAP" id="MF_00107">
    <property type="entry name" value="IspF"/>
    <property type="match status" value="1"/>
</dbReference>
<dbReference type="InterPro" id="IPR003526">
    <property type="entry name" value="MECDP_synthase"/>
</dbReference>
<dbReference type="InterPro" id="IPR020555">
    <property type="entry name" value="MECDP_synthase_CS"/>
</dbReference>
<dbReference type="InterPro" id="IPR036571">
    <property type="entry name" value="MECDP_synthase_sf"/>
</dbReference>
<dbReference type="NCBIfam" id="TIGR00151">
    <property type="entry name" value="ispF"/>
    <property type="match status" value="1"/>
</dbReference>
<dbReference type="PANTHER" id="PTHR43181">
    <property type="entry name" value="2-C-METHYL-D-ERYTHRITOL 2,4-CYCLODIPHOSPHATE SYNTHASE, CHLOROPLASTIC"/>
    <property type="match status" value="1"/>
</dbReference>
<dbReference type="PANTHER" id="PTHR43181:SF1">
    <property type="entry name" value="2-C-METHYL-D-ERYTHRITOL 2,4-CYCLODIPHOSPHATE SYNTHASE, CHLOROPLASTIC"/>
    <property type="match status" value="1"/>
</dbReference>
<dbReference type="Pfam" id="PF02542">
    <property type="entry name" value="YgbB"/>
    <property type="match status" value="1"/>
</dbReference>
<dbReference type="SUPFAM" id="SSF69765">
    <property type="entry name" value="IpsF-like"/>
    <property type="match status" value="1"/>
</dbReference>
<dbReference type="PROSITE" id="PS01350">
    <property type="entry name" value="ISPF"/>
    <property type="match status" value="1"/>
</dbReference>
<reference key="1">
    <citation type="journal article" date="2009" name="Genome Res.">
        <title>Newly introduced genomic prophage islands are critical determinants of in vivo competitiveness in the Liverpool epidemic strain of Pseudomonas aeruginosa.</title>
        <authorList>
            <person name="Winstanley C."/>
            <person name="Langille M.G.I."/>
            <person name="Fothergill J.L."/>
            <person name="Kukavica-Ibrulj I."/>
            <person name="Paradis-Bleau C."/>
            <person name="Sanschagrin F."/>
            <person name="Thomson N.R."/>
            <person name="Winsor G.L."/>
            <person name="Quail M.A."/>
            <person name="Lennard N."/>
            <person name="Bignell A."/>
            <person name="Clarke L."/>
            <person name="Seeger K."/>
            <person name="Saunders D."/>
            <person name="Harris D."/>
            <person name="Parkhill J."/>
            <person name="Hancock R.E.W."/>
            <person name="Brinkman F.S.L."/>
            <person name="Levesque R.C."/>
        </authorList>
    </citation>
    <scope>NUCLEOTIDE SEQUENCE [LARGE SCALE GENOMIC DNA]</scope>
    <source>
        <strain>LESB58</strain>
    </source>
</reference>
<protein>
    <recommendedName>
        <fullName evidence="1">2-C-methyl-D-erythritol 2,4-cyclodiphosphate synthase</fullName>
        <shortName evidence="1">MECDP-synthase</shortName>
        <shortName evidence="1">MECPP-synthase</shortName>
        <shortName evidence="1">MECPS</shortName>
        <ecNumber evidence="1">4.6.1.12</ecNumber>
    </recommendedName>
</protein>
<evidence type="ECO:0000255" key="1">
    <source>
        <dbReference type="HAMAP-Rule" id="MF_00107"/>
    </source>
</evidence>
<accession>B7V8C1</accession>
<sequence>MRIGHGYDVHRFGEGDFITLGGVRIPHKHGLVAHSDGDVLLHALSDALLGAAALGDIGKHFPDTDPRFKGADSRALLRHVVAIVAEKGWKVGNVDATIVAQAPKMAPHIETMRGLIAEDLGVAVDQVNVKATTTERLGFTGREEGIAVHAVALLMAR</sequence>
<gene>
    <name evidence="1" type="primary">ispF</name>
    <name type="ordered locus">PLES_14081</name>
</gene>
<proteinExistence type="inferred from homology"/>
<organism>
    <name type="scientific">Pseudomonas aeruginosa (strain LESB58)</name>
    <dbReference type="NCBI Taxonomy" id="557722"/>
    <lineage>
        <taxon>Bacteria</taxon>
        <taxon>Pseudomonadati</taxon>
        <taxon>Pseudomonadota</taxon>
        <taxon>Gammaproteobacteria</taxon>
        <taxon>Pseudomonadales</taxon>
        <taxon>Pseudomonadaceae</taxon>
        <taxon>Pseudomonas</taxon>
    </lineage>
</organism>
<keyword id="KW-0414">Isoprene biosynthesis</keyword>
<keyword id="KW-0456">Lyase</keyword>
<keyword id="KW-0479">Metal-binding</keyword>
<feature type="chain" id="PRO_1000117433" description="2-C-methyl-D-erythritol 2,4-cyclodiphosphate synthase">
    <location>
        <begin position="1"/>
        <end position="157"/>
    </location>
</feature>
<feature type="binding site" evidence="1">
    <location>
        <begin position="8"/>
        <end position="10"/>
    </location>
    <ligand>
        <name>4-CDP-2-C-methyl-D-erythritol 2-phosphate</name>
        <dbReference type="ChEBI" id="CHEBI:57919"/>
    </ligand>
</feature>
<feature type="binding site" evidence="1">
    <location>
        <position position="8"/>
    </location>
    <ligand>
        <name>a divalent metal cation</name>
        <dbReference type="ChEBI" id="CHEBI:60240"/>
    </ligand>
</feature>
<feature type="binding site" evidence="1">
    <location>
        <position position="10"/>
    </location>
    <ligand>
        <name>a divalent metal cation</name>
        <dbReference type="ChEBI" id="CHEBI:60240"/>
    </ligand>
</feature>
<feature type="binding site" evidence="1">
    <location>
        <begin position="34"/>
        <end position="35"/>
    </location>
    <ligand>
        <name>4-CDP-2-C-methyl-D-erythritol 2-phosphate</name>
        <dbReference type="ChEBI" id="CHEBI:57919"/>
    </ligand>
</feature>
<feature type="binding site" evidence="1">
    <location>
        <position position="42"/>
    </location>
    <ligand>
        <name>a divalent metal cation</name>
        <dbReference type="ChEBI" id="CHEBI:60240"/>
    </ligand>
</feature>
<feature type="binding site" evidence="1">
    <location>
        <begin position="56"/>
        <end position="58"/>
    </location>
    <ligand>
        <name>4-CDP-2-C-methyl-D-erythritol 2-phosphate</name>
        <dbReference type="ChEBI" id="CHEBI:57919"/>
    </ligand>
</feature>
<feature type="binding site" evidence="1">
    <location>
        <begin position="61"/>
        <end position="65"/>
    </location>
    <ligand>
        <name>4-CDP-2-C-methyl-D-erythritol 2-phosphate</name>
        <dbReference type="ChEBI" id="CHEBI:57919"/>
    </ligand>
</feature>
<feature type="binding site" evidence="1">
    <location>
        <begin position="100"/>
        <end position="106"/>
    </location>
    <ligand>
        <name>4-CDP-2-C-methyl-D-erythritol 2-phosphate</name>
        <dbReference type="ChEBI" id="CHEBI:57919"/>
    </ligand>
</feature>
<feature type="binding site" evidence="1">
    <location>
        <begin position="132"/>
        <end position="135"/>
    </location>
    <ligand>
        <name>4-CDP-2-C-methyl-D-erythritol 2-phosphate</name>
        <dbReference type="ChEBI" id="CHEBI:57919"/>
    </ligand>
</feature>
<feature type="binding site" evidence="1">
    <location>
        <position position="139"/>
    </location>
    <ligand>
        <name>4-CDP-2-C-methyl-D-erythritol 2-phosphate</name>
        <dbReference type="ChEBI" id="CHEBI:57919"/>
    </ligand>
</feature>
<feature type="binding site" evidence="1">
    <location>
        <position position="142"/>
    </location>
    <ligand>
        <name>4-CDP-2-C-methyl-D-erythritol 2-phosphate</name>
        <dbReference type="ChEBI" id="CHEBI:57919"/>
    </ligand>
</feature>
<feature type="site" description="Transition state stabilizer" evidence="1">
    <location>
        <position position="34"/>
    </location>
</feature>
<feature type="site" description="Transition state stabilizer" evidence="1">
    <location>
        <position position="133"/>
    </location>
</feature>